<comment type="function">
    <text evidence="1">Participates actively in the response to hyperosmotic and heat shock by preventing the aggregation of stress-denatured proteins and by disaggregating proteins, also in an autonomous, DnaK-independent fashion. Unfolded proteins bind initially to DnaJ; upon interaction with the DnaJ-bound protein, DnaK hydrolyzes its bound ATP, resulting in the formation of a stable complex. GrpE releases ADP from DnaK; ATP binding to DnaK triggers the release of the substrate protein, thus completing the reaction cycle. Several rounds of ATP-dependent interactions between DnaJ, DnaK and GrpE are required for fully efficient folding. Also involved, together with DnaK and GrpE, in the DNA replication of plasmids through activation of initiation proteins.</text>
</comment>
<comment type="cofactor">
    <cofactor evidence="1">
        <name>Zn(2+)</name>
        <dbReference type="ChEBI" id="CHEBI:29105"/>
    </cofactor>
    <text evidence="1">Binds 2 Zn(2+) ions per monomer.</text>
</comment>
<comment type="subunit">
    <text evidence="1">Homodimer.</text>
</comment>
<comment type="subcellular location">
    <subcellularLocation>
        <location evidence="1">Cytoplasm</location>
    </subcellularLocation>
</comment>
<comment type="domain">
    <text evidence="1">The J domain is necessary and sufficient to stimulate DnaK ATPase activity. Zinc center 1 plays an important role in the autonomous, DnaK-independent chaperone activity of DnaJ. Zinc center 2 is essential for interaction with DnaK and for DnaJ activity.</text>
</comment>
<comment type="similarity">
    <text evidence="1">Belongs to the DnaJ family.</text>
</comment>
<evidence type="ECO:0000255" key="1">
    <source>
        <dbReference type="HAMAP-Rule" id="MF_01152"/>
    </source>
</evidence>
<evidence type="ECO:0000305" key="2"/>
<sequence>MSKRDFYEVLGVGRDASERDIKKAYKRLAMKYHPDRNSGDAGAAEKFKEVKEAYEILTDAQKKAAYDQYGHAAFEQGAGGFGGGGFGGGGADFGDIFGDVFGDIFGGGRRGGGPRAQRGSDLRYNMELSLEEAVRGCSKEIEVPTLVHCDACDGSGAKKGTSAQTCGTCHGHGQVQMRQGFFAVQQTCPTCHGKGKIIKDPCNVCHGQGRKQKTKTLNVKIPAGVDTGDRIRLSGEGEAGEMGAPAGDLYVQVHVKEHHIFERDGNNLYCEVPVSFAMAALGGEVEVPTLDGRVSLKVPAETQTGRMFRMRGKGVKGVRSAALGDLIVKLVVETPVNLSARQKELLKEFEESCGGEAATKHKPKAEGFFNGVKKFFDDLTS</sequence>
<accession>O34242</accession>
<accession>Q9KTP5</accession>
<keyword id="KW-0143">Chaperone</keyword>
<keyword id="KW-0963">Cytoplasm</keyword>
<keyword id="KW-0235">DNA replication</keyword>
<keyword id="KW-0479">Metal-binding</keyword>
<keyword id="KW-1185">Reference proteome</keyword>
<keyword id="KW-0677">Repeat</keyword>
<keyword id="KW-0346">Stress response</keyword>
<keyword id="KW-0862">Zinc</keyword>
<keyword id="KW-0863">Zinc-finger</keyword>
<dbReference type="EMBL" id="AE003852">
    <property type="protein sequence ID" value="AAF94018.1"/>
    <property type="molecule type" value="Genomic_DNA"/>
</dbReference>
<dbReference type="EMBL" id="Y14237">
    <property type="protein sequence ID" value="CAA74628.1"/>
    <property type="molecule type" value="Genomic_DNA"/>
</dbReference>
<dbReference type="PIR" id="D82270">
    <property type="entry name" value="D82270"/>
</dbReference>
<dbReference type="RefSeq" id="NP_230503.1">
    <property type="nucleotide sequence ID" value="NC_002505.1"/>
</dbReference>
<dbReference type="RefSeq" id="WP_000043914.1">
    <property type="nucleotide sequence ID" value="NZ_LT906614.1"/>
</dbReference>
<dbReference type="SMR" id="O34242"/>
<dbReference type="STRING" id="243277.VC_0856"/>
<dbReference type="DNASU" id="2614523"/>
<dbReference type="EnsemblBacteria" id="AAF94018">
    <property type="protein sequence ID" value="AAF94018"/>
    <property type="gene ID" value="VC_0856"/>
</dbReference>
<dbReference type="GeneID" id="89515026"/>
<dbReference type="KEGG" id="vch:VC_0856"/>
<dbReference type="PATRIC" id="fig|243277.26.peg.817"/>
<dbReference type="eggNOG" id="COG0484">
    <property type="taxonomic scope" value="Bacteria"/>
</dbReference>
<dbReference type="HOGENOM" id="CLU_017633_0_7_6"/>
<dbReference type="Proteomes" id="UP000000584">
    <property type="component" value="Chromosome 1"/>
</dbReference>
<dbReference type="GO" id="GO:0005737">
    <property type="term" value="C:cytoplasm"/>
    <property type="evidence" value="ECO:0000318"/>
    <property type="project" value="GO_Central"/>
</dbReference>
<dbReference type="GO" id="GO:0005524">
    <property type="term" value="F:ATP binding"/>
    <property type="evidence" value="ECO:0007669"/>
    <property type="project" value="InterPro"/>
</dbReference>
<dbReference type="GO" id="GO:0031072">
    <property type="term" value="F:heat shock protein binding"/>
    <property type="evidence" value="ECO:0007669"/>
    <property type="project" value="InterPro"/>
</dbReference>
<dbReference type="GO" id="GO:0051082">
    <property type="term" value="F:unfolded protein binding"/>
    <property type="evidence" value="ECO:0000318"/>
    <property type="project" value="GO_Central"/>
</dbReference>
<dbReference type="GO" id="GO:0008270">
    <property type="term" value="F:zinc ion binding"/>
    <property type="evidence" value="ECO:0007669"/>
    <property type="project" value="UniProtKB-UniRule"/>
</dbReference>
<dbReference type="GO" id="GO:0051085">
    <property type="term" value="P:chaperone cofactor-dependent protein refolding"/>
    <property type="evidence" value="ECO:0000318"/>
    <property type="project" value="GO_Central"/>
</dbReference>
<dbReference type="GO" id="GO:0006260">
    <property type="term" value="P:DNA replication"/>
    <property type="evidence" value="ECO:0007669"/>
    <property type="project" value="UniProtKB-KW"/>
</dbReference>
<dbReference type="GO" id="GO:0042026">
    <property type="term" value="P:protein refolding"/>
    <property type="evidence" value="ECO:0000318"/>
    <property type="project" value="GO_Central"/>
</dbReference>
<dbReference type="GO" id="GO:0009408">
    <property type="term" value="P:response to heat"/>
    <property type="evidence" value="ECO:0007669"/>
    <property type="project" value="InterPro"/>
</dbReference>
<dbReference type="CDD" id="cd06257">
    <property type="entry name" value="DnaJ"/>
    <property type="match status" value="1"/>
</dbReference>
<dbReference type="CDD" id="cd10747">
    <property type="entry name" value="DnaJ_C"/>
    <property type="match status" value="1"/>
</dbReference>
<dbReference type="CDD" id="cd10719">
    <property type="entry name" value="DnaJ_zf"/>
    <property type="match status" value="1"/>
</dbReference>
<dbReference type="FunFam" id="1.10.287.110:FF:000003">
    <property type="entry name" value="Molecular chaperone DnaJ"/>
    <property type="match status" value="1"/>
</dbReference>
<dbReference type="FunFam" id="2.10.230.10:FF:000002">
    <property type="entry name" value="Molecular chaperone DnaJ"/>
    <property type="match status" value="1"/>
</dbReference>
<dbReference type="FunFam" id="2.60.260.20:FF:000004">
    <property type="entry name" value="Molecular chaperone DnaJ"/>
    <property type="match status" value="1"/>
</dbReference>
<dbReference type="Gene3D" id="1.10.287.110">
    <property type="entry name" value="DnaJ domain"/>
    <property type="match status" value="1"/>
</dbReference>
<dbReference type="Gene3D" id="2.10.230.10">
    <property type="entry name" value="Heat shock protein DnaJ, cysteine-rich domain"/>
    <property type="match status" value="1"/>
</dbReference>
<dbReference type="Gene3D" id="2.60.260.20">
    <property type="entry name" value="Urease metallochaperone UreE, N-terminal domain"/>
    <property type="match status" value="2"/>
</dbReference>
<dbReference type="HAMAP" id="MF_01152">
    <property type="entry name" value="DnaJ"/>
    <property type="match status" value="1"/>
</dbReference>
<dbReference type="InterPro" id="IPR012724">
    <property type="entry name" value="DnaJ"/>
</dbReference>
<dbReference type="InterPro" id="IPR002939">
    <property type="entry name" value="DnaJ_C"/>
</dbReference>
<dbReference type="InterPro" id="IPR001623">
    <property type="entry name" value="DnaJ_domain"/>
</dbReference>
<dbReference type="InterPro" id="IPR018253">
    <property type="entry name" value="DnaJ_domain_CS"/>
</dbReference>
<dbReference type="InterPro" id="IPR008971">
    <property type="entry name" value="HSP40/DnaJ_pept-bd"/>
</dbReference>
<dbReference type="InterPro" id="IPR001305">
    <property type="entry name" value="HSP_DnaJ_Cys-rich_dom"/>
</dbReference>
<dbReference type="InterPro" id="IPR036410">
    <property type="entry name" value="HSP_DnaJ_Cys-rich_dom_sf"/>
</dbReference>
<dbReference type="InterPro" id="IPR036869">
    <property type="entry name" value="J_dom_sf"/>
</dbReference>
<dbReference type="NCBIfam" id="TIGR02349">
    <property type="entry name" value="DnaJ_bact"/>
    <property type="match status" value="1"/>
</dbReference>
<dbReference type="NCBIfam" id="NF008035">
    <property type="entry name" value="PRK10767.1"/>
    <property type="match status" value="1"/>
</dbReference>
<dbReference type="PANTHER" id="PTHR43096:SF48">
    <property type="entry name" value="CHAPERONE PROTEIN DNAJ"/>
    <property type="match status" value="1"/>
</dbReference>
<dbReference type="PANTHER" id="PTHR43096">
    <property type="entry name" value="DNAJ HOMOLOG 1, MITOCHONDRIAL-RELATED"/>
    <property type="match status" value="1"/>
</dbReference>
<dbReference type="Pfam" id="PF00226">
    <property type="entry name" value="DnaJ"/>
    <property type="match status" value="1"/>
</dbReference>
<dbReference type="Pfam" id="PF01556">
    <property type="entry name" value="DnaJ_C"/>
    <property type="match status" value="1"/>
</dbReference>
<dbReference type="Pfam" id="PF00684">
    <property type="entry name" value="DnaJ_CXXCXGXG"/>
    <property type="match status" value="1"/>
</dbReference>
<dbReference type="PRINTS" id="PR00625">
    <property type="entry name" value="JDOMAIN"/>
</dbReference>
<dbReference type="SMART" id="SM00271">
    <property type="entry name" value="DnaJ"/>
    <property type="match status" value="1"/>
</dbReference>
<dbReference type="SUPFAM" id="SSF46565">
    <property type="entry name" value="Chaperone J-domain"/>
    <property type="match status" value="1"/>
</dbReference>
<dbReference type="SUPFAM" id="SSF57938">
    <property type="entry name" value="DnaJ/Hsp40 cysteine-rich domain"/>
    <property type="match status" value="1"/>
</dbReference>
<dbReference type="SUPFAM" id="SSF49493">
    <property type="entry name" value="HSP40/DnaJ peptide-binding domain"/>
    <property type="match status" value="2"/>
</dbReference>
<dbReference type="PROSITE" id="PS00636">
    <property type="entry name" value="DNAJ_1"/>
    <property type="match status" value="1"/>
</dbReference>
<dbReference type="PROSITE" id="PS50076">
    <property type="entry name" value="DNAJ_2"/>
    <property type="match status" value="1"/>
</dbReference>
<dbReference type="PROSITE" id="PS51188">
    <property type="entry name" value="ZF_CR"/>
    <property type="match status" value="1"/>
</dbReference>
<organism>
    <name type="scientific">Vibrio cholerae serotype O1 (strain ATCC 39315 / El Tor Inaba N16961)</name>
    <dbReference type="NCBI Taxonomy" id="243277"/>
    <lineage>
        <taxon>Bacteria</taxon>
        <taxon>Pseudomonadati</taxon>
        <taxon>Pseudomonadota</taxon>
        <taxon>Gammaproteobacteria</taxon>
        <taxon>Vibrionales</taxon>
        <taxon>Vibrionaceae</taxon>
        <taxon>Vibrio</taxon>
    </lineage>
</organism>
<feature type="chain" id="PRO_0000070927" description="Chaperone protein DnaJ">
    <location>
        <begin position="1"/>
        <end position="381"/>
    </location>
</feature>
<feature type="domain" description="J" evidence="1">
    <location>
        <begin position="5"/>
        <end position="70"/>
    </location>
</feature>
<feature type="repeat" description="CXXCXGXG motif">
    <location>
        <begin position="149"/>
        <end position="156"/>
    </location>
</feature>
<feature type="repeat" description="CXXCXGXG motif">
    <location>
        <begin position="166"/>
        <end position="173"/>
    </location>
</feature>
<feature type="repeat" description="CXXCXGXG motif">
    <location>
        <begin position="188"/>
        <end position="195"/>
    </location>
</feature>
<feature type="repeat" description="CXXCXGXG motif">
    <location>
        <begin position="202"/>
        <end position="209"/>
    </location>
</feature>
<feature type="zinc finger region" description="CR-type" evidence="1">
    <location>
        <begin position="136"/>
        <end position="214"/>
    </location>
</feature>
<feature type="binding site" evidence="1">
    <location>
        <position position="149"/>
    </location>
    <ligand>
        <name>Zn(2+)</name>
        <dbReference type="ChEBI" id="CHEBI:29105"/>
        <label>1</label>
    </ligand>
</feature>
<feature type="binding site" evidence="1">
    <location>
        <position position="152"/>
    </location>
    <ligand>
        <name>Zn(2+)</name>
        <dbReference type="ChEBI" id="CHEBI:29105"/>
        <label>1</label>
    </ligand>
</feature>
<feature type="binding site" evidence="1">
    <location>
        <position position="166"/>
    </location>
    <ligand>
        <name>Zn(2+)</name>
        <dbReference type="ChEBI" id="CHEBI:29105"/>
        <label>2</label>
    </ligand>
</feature>
<feature type="binding site" evidence="1">
    <location>
        <position position="169"/>
    </location>
    <ligand>
        <name>Zn(2+)</name>
        <dbReference type="ChEBI" id="CHEBI:29105"/>
        <label>2</label>
    </ligand>
</feature>
<feature type="binding site" evidence="1">
    <location>
        <position position="188"/>
    </location>
    <ligand>
        <name>Zn(2+)</name>
        <dbReference type="ChEBI" id="CHEBI:29105"/>
        <label>2</label>
    </ligand>
</feature>
<feature type="binding site" evidence="1">
    <location>
        <position position="191"/>
    </location>
    <ligand>
        <name>Zn(2+)</name>
        <dbReference type="ChEBI" id="CHEBI:29105"/>
        <label>2</label>
    </ligand>
</feature>
<feature type="binding site" evidence="1">
    <location>
        <position position="202"/>
    </location>
    <ligand>
        <name>Zn(2+)</name>
        <dbReference type="ChEBI" id="CHEBI:29105"/>
        <label>1</label>
    </ligand>
</feature>
<feature type="binding site" evidence="1">
    <location>
        <position position="205"/>
    </location>
    <ligand>
        <name>Zn(2+)</name>
        <dbReference type="ChEBI" id="CHEBI:29105"/>
        <label>1</label>
    </ligand>
</feature>
<feature type="sequence conflict" description="In Ref. 2; CAA74628." evidence="2" ref="2">
    <original>NS</original>
    <variation>TP</variation>
    <location>
        <begin position="37"/>
        <end position="38"/>
    </location>
</feature>
<feature type="sequence conflict" description="In Ref. 2; CAA74628." evidence="2" ref="2">
    <original>AAE</original>
    <variation>CRG</variation>
    <location>
        <begin position="43"/>
        <end position="45"/>
    </location>
</feature>
<feature type="sequence conflict" description="In Ref. 2; CAA74628." evidence="2" ref="2">
    <original>EVK</original>
    <variation>IQ</variation>
    <location>
        <begin position="49"/>
        <end position="51"/>
    </location>
</feature>
<feature type="sequence conflict" description="In Ref. 2; CAA74628." evidence="2" ref="2">
    <original>D</original>
    <variation>E</variation>
    <location>
        <position position="67"/>
    </location>
</feature>
<feature type="sequence conflict" description="In Ref. 2; CAA74628." evidence="2" ref="2">
    <original>H</original>
    <variation>I</variation>
    <location>
        <position position="71"/>
    </location>
</feature>
<feature type="sequence conflict" description="In Ref. 2; CAA74628." evidence="2" ref="2">
    <original>AGG</original>
    <variation>RVV</variation>
    <location>
        <begin position="78"/>
        <end position="80"/>
    </location>
</feature>
<name>DNAJ_VIBCH</name>
<reference key="1">
    <citation type="journal article" date="2000" name="Nature">
        <title>DNA sequence of both chromosomes of the cholera pathogen Vibrio cholerae.</title>
        <authorList>
            <person name="Heidelberg J.F."/>
            <person name="Eisen J.A."/>
            <person name="Nelson W.C."/>
            <person name="Clayton R.A."/>
            <person name="Gwinn M.L."/>
            <person name="Dodson R.J."/>
            <person name="Haft D.H."/>
            <person name="Hickey E.K."/>
            <person name="Peterson J.D."/>
            <person name="Umayam L.A."/>
            <person name="Gill S.R."/>
            <person name="Nelson K.E."/>
            <person name="Read T.D."/>
            <person name="Tettelin H."/>
            <person name="Richardson D.L."/>
            <person name="Ermolaeva M.D."/>
            <person name="Vamathevan J.J."/>
            <person name="Bass S."/>
            <person name="Qin H."/>
            <person name="Dragoi I."/>
            <person name="Sellers P."/>
            <person name="McDonald L.A."/>
            <person name="Utterback T.R."/>
            <person name="Fleischmann R.D."/>
            <person name="Nierman W.C."/>
            <person name="White O."/>
            <person name="Salzberg S.L."/>
            <person name="Smith H.O."/>
            <person name="Colwell R.R."/>
            <person name="Mekalanos J.J."/>
            <person name="Venter J.C."/>
            <person name="Fraser C.M."/>
        </authorList>
    </citation>
    <scope>NUCLEOTIDE SEQUENCE [LARGE SCALE GENOMIC DNA]</scope>
    <source>
        <strain>ATCC 39315 / El Tor Inaba N16961</strain>
    </source>
</reference>
<reference key="2">
    <citation type="journal article" date="1999" name="Infect. Immun.">
        <title>Role of DnaK in in vitro and in vivo expression of virulence factors of Vibrio cholerae.</title>
        <authorList>
            <person name="Chakrabarti S."/>
            <person name="Sengupta N."/>
            <person name="Chowdhury R."/>
        </authorList>
    </citation>
    <scope>NUCLEOTIDE SEQUENCE [GENOMIC DNA] OF 1-80</scope>
    <source>
        <strain>ATCC 25870 / Classical Inaba 569B / Serotype O1</strain>
    </source>
</reference>
<gene>
    <name evidence="1" type="primary">dnaJ</name>
    <name type="ordered locus">VC_0856</name>
</gene>
<protein>
    <recommendedName>
        <fullName evidence="1">Chaperone protein DnaJ</fullName>
    </recommendedName>
</protein>
<proteinExistence type="inferred from homology"/>